<accession>B3QLZ5</accession>
<keyword id="KW-0963">Cytoplasm</keyword>
<keyword id="KW-0227">DNA damage</keyword>
<keyword id="KW-0233">DNA recombination</keyword>
<keyword id="KW-0234">DNA repair</keyword>
<keyword id="KW-0238">DNA-binding</keyword>
<keyword id="KW-0255">Endonuclease</keyword>
<keyword id="KW-0378">Hydrolase</keyword>
<keyword id="KW-0460">Magnesium</keyword>
<keyword id="KW-0479">Metal-binding</keyword>
<keyword id="KW-0540">Nuclease</keyword>
<feature type="chain" id="PRO_1000090513" description="Crossover junction endodeoxyribonuclease RuvC">
    <location>
        <begin position="1"/>
        <end position="187"/>
    </location>
</feature>
<feature type="active site" evidence="1">
    <location>
        <position position="7"/>
    </location>
</feature>
<feature type="active site" evidence="1">
    <location>
        <position position="67"/>
    </location>
</feature>
<feature type="active site" evidence="1">
    <location>
        <position position="140"/>
    </location>
</feature>
<feature type="binding site" evidence="1">
    <location>
        <position position="7"/>
    </location>
    <ligand>
        <name>Mg(2+)</name>
        <dbReference type="ChEBI" id="CHEBI:18420"/>
        <label>1</label>
    </ligand>
</feature>
<feature type="binding site" evidence="1">
    <location>
        <position position="67"/>
    </location>
    <ligand>
        <name>Mg(2+)</name>
        <dbReference type="ChEBI" id="CHEBI:18420"/>
        <label>2</label>
    </ligand>
</feature>
<feature type="binding site" evidence="1">
    <location>
        <position position="140"/>
    </location>
    <ligand>
        <name>Mg(2+)</name>
        <dbReference type="ChEBI" id="CHEBI:18420"/>
        <label>1</label>
    </ligand>
</feature>
<proteinExistence type="inferred from homology"/>
<protein>
    <recommendedName>
        <fullName evidence="1">Crossover junction endodeoxyribonuclease RuvC</fullName>
        <ecNumber evidence="1">3.1.21.10</ecNumber>
    </recommendedName>
    <alternativeName>
        <fullName evidence="1">Holliday junction nuclease RuvC</fullName>
    </alternativeName>
    <alternativeName>
        <fullName evidence="1">Holliday junction resolvase RuvC</fullName>
    </alternativeName>
</protein>
<name>RUVC_CHLP8</name>
<evidence type="ECO:0000255" key="1">
    <source>
        <dbReference type="HAMAP-Rule" id="MF_00034"/>
    </source>
</evidence>
<dbReference type="EC" id="3.1.21.10" evidence="1"/>
<dbReference type="EMBL" id="CP001099">
    <property type="protein sequence ID" value="ACF10948.1"/>
    <property type="molecule type" value="Genomic_DNA"/>
</dbReference>
<dbReference type="RefSeq" id="WP_012501781.1">
    <property type="nucleotide sequence ID" value="NC_011027.1"/>
</dbReference>
<dbReference type="SMR" id="B3QLZ5"/>
<dbReference type="STRING" id="517417.Cpar_0526"/>
<dbReference type="KEGG" id="cpc:Cpar_0526"/>
<dbReference type="eggNOG" id="COG0817">
    <property type="taxonomic scope" value="Bacteria"/>
</dbReference>
<dbReference type="HOGENOM" id="CLU_091257_3_0_10"/>
<dbReference type="OrthoDB" id="9805499at2"/>
<dbReference type="Proteomes" id="UP000008811">
    <property type="component" value="Chromosome"/>
</dbReference>
<dbReference type="GO" id="GO:0005737">
    <property type="term" value="C:cytoplasm"/>
    <property type="evidence" value="ECO:0007669"/>
    <property type="project" value="UniProtKB-SubCell"/>
</dbReference>
<dbReference type="GO" id="GO:0048476">
    <property type="term" value="C:Holliday junction resolvase complex"/>
    <property type="evidence" value="ECO:0007669"/>
    <property type="project" value="UniProtKB-UniRule"/>
</dbReference>
<dbReference type="GO" id="GO:0008821">
    <property type="term" value="F:crossover junction DNA endonuclease activity"/>
    <property type="evidence" value="ECO:0007669"/>
    <property type="project" value="UniProtKB-UniRule"/>
</dbReference>
<dbReference type="GO" id="GO:0003677">
    <property type="term" value="F:DNA binding"/>
    <property type="evidence" value="ECO:0007669"/>
    <property type="project" value="UniProtKB-KW"/>
</dbReference>
<dbReference type="GO" id="GO:0000287">
    <property type="term" value="F:magnesium ion binding"/>
    <property type="evidence" value="ECO:0007669"/>
    <property type="project" value="UniProtKB-UniRule"/>
</dbReference>
<dbReference type="GO" id="GO:0006310">
    <property type="term" value="P:DNA recombination"/>
    <property type="evidence" value="ECO:0007669"/>
    <property type="project" value="UniProtKB-UniRule"/>
</dbReference>
<dbReference type="GO" id="GO:0006281">
    <property type="term" value="P:DNA repair"/>
    <property type="evidence" value="ECO:0007669"/>
    <property type="project" value="UniProtKB-UniRule"/>
</dbReference>
<dbReference type="CDD" id="cd16962">
    <property type="entry name" value="RuvC"/>
    <property type="match status" value="1"/>
</dbReference>
<dbReference type="FunFam" id="3.30.420.10:FF:000002">
    <property type="entry name" value="Crossover junction endodeoxyribonuclease RuvC"/>
    <property type="match status" value="1"/>
</dbReference>
<dbReference type="Gene3D" id="3.30.420.10">
    <property type="entry name" value="Ribonuclease H-like superfamily/Ribonuclease H"/>
    <property type="match status" value="1"/>
</dbReference>
<dbReference type="HAMAP" id="MF_00034">
    <property type="entry name" value="RuvC"/>
    <property type="match status" value="1"/>
</dbReference>
<dbReference type="InterPro" id="IPR012337">
    <property type="entry name" value="RNaseH-like_sf"/>
</dbReference>
<dbReference type="InterPro" id="IPR036397">
    <property type="entry name" value="RNaseH_sf"/>
</dbReference>
<dbReference type="InterPro" id="IPR020563">
    <property type="entry name" value="X-over_junc_endoDNase_Mg_BS"/>
</dbReference>
<dbReference type="InterPro" id="IPR002176">
    <property type="entry name" value="X-over_junc_endoDNase_RuvC"/>
</dbReference>
<dbReference type="NCBIfam" id="TIGR00228">
    <property type="entry name" value="ruvC"/>
    <property type="match status" value="1"/>
</dbReference>
<dbReference type="PANTHER" id="PTHR30194">
    <property type="entry name" value="CROSSOVER JUNCTION ENDODEOXYRIBONUCLEASE RUVC"/>
    <property type="match status" value="1"/>
</dbReference>
<dbReference type="PANTHER" id="PTHR30194:SF3">
    <property type="entry name" value="CROSSOVER JUNCTION ENDODEOXYRIBONUCLEASE RUVC"/>
    <property type="match status" value="1"/>
</dbReference>
<dbReference type="Pfam" id="PF02075">
    <property type="entry name" value="RuvC"/>
    <property type="match status" value="1"/>
</dbReference>
<dbReference type="PRINTS" id="PR00696">
    <property type="entry name" value="RSOLVASERUVC"/>
</dbReference>
<dbReference type="SUPFAM" id="SSF53098">
    <property type="entry name" value="Ribonuclease H-like"/>
    <property type="match status" value="1"/>
</dbReference>
<dbReference type="PROSITE" id="PS01321">
    <property type="entry name" value="RUVC"/>
    <property type="match status" value="1"/>
</dbReference>
<sequence length="187" mass="19397">MIVLGVDPGSRKTGYGVIAEAEGRLSVLGCGLIRPAASGTLHERIGQLCSGLEEVIANMKPEAVALETAFVGRNVRSALILGQVRGAVLATVIKLGLPVREYAPREIKLAVTGTGAARKEQVASMLPRLLGLEEAPKPLDVTDALGIAYCDLSRGASLTGHCGMTGSGKSRSKGWAAFVDAHPELLA</sequence>
<comment type="function">
    <text evidence="1">The RuvA-RuvB-RuvC complex processes Holliday junction (HJ) DNA during genetic recombination and DNA repair. Endonuclease that resolves HJ intermediates. Cleaves cruciform DNA by making single-stranded nicks across the HJ at symmetrical positions within the homologous arms, yielding a 5'-phosphate and a 3'-hydroxyl group; requires a central core of homology in the junction. The consensus cleavage sequence is 5'-(A/T)TT(C/G)-3'. Cleavage occurs on the 3'-side of the TT dinucleotide at the point of strand exchange. HJ branch migration catalyzed by RuvA-RuvB allows RuvC to scan DNA until it finds its consensus sequence, where it cleaves and resolves the cruciform DNA.</text>
</comment>
<comment type="catalytic activity">
    <reaction evidence="1">
        <text>Endonucleolytic cleavage at a junction such as a reciprocal single-stranded crossover between two homologous DNA duplexes (Holliday junction).</text>
        <dbReference type="EC" id="3.1.21.10"/>
    </reaction>
</comment>
<comment type="cofactor">
    <cofactor evidence="1">
        <name>Mg(2+)</name>
        <dbReference type="ChEBI" id="CHEBI:18420"/>
    </cofactor>
    <text evidence="1">Binds 2 Mg(2+) ion per subunit.</text>
</comment>
<comment type="subunit">
    <text evidence="1">Homodimer which binds Holliday junction (HJ) DNA. The HJ becomes 2-fold symmetrical on binding to RuvC with unstacked arms; it has a different conformation from HJ DNA in complex with RuvA. In the full resolvosome a probable DNA-RuvA(4)-RuvB(12)-RuvC(2) complex forms which resolves the HJ.</text>
</comment>
<comment type="subcellular location">
    <subcellularLocation>
        <location evidence="1">Cytoplasm</location>
    </subcellularLocation>
</comment>
<comment type="similarity">
    <text evidence="1">Belongs to the RuvC family.</text>
</comment>
<organism>
    <name type="scientific">Chlorobaculum parvum (strain DSM 263 / NCIMB 8327)</name>
    <name type="common">Chlorobium vibrioforme subsp. thiosulfatophilum</name>
    <dbReference type="NCBI Taxonomy" id="517417"/>
    <lineage>
        <taxon>Bacteria</taxon>
        <taxon>Pseudomonadati</taxon>
        <taxon>Chlorobiota</taxon>
        <taxon>Chlorobiia</taxon>
        <taxon>Chlorobiales</taxon>
        <taxon>Chlorobiaceae</taxon>
        <taxon>Chlorobaculum</taxon>
    </lineage>
</organism>
<gene>
    <name evidence="1" type="primary">ruvC</name>
    <name type="ordered locus">Cpar_0526</name>
</gene>
<reference key="1">
    <citation type="submission" date="2008-06" db="EMBL/GenBank/DDBJ databases">
        <title>Complete sequence of Chlorobaculum parvum NCIB 8327.</title>
        <authorList>
            <consortium name="US DOE Joint Genome Institute"/>
            <person name="Lucas S."/>
            <person name="Copeland A."/>
            <person name="Lapidus A."/>
            <person name="Glavina del Rio T."/>
            <person name="Dalin E."/>
            <person name="Tice H."/>
            <person name="Bruce D."/>
            <person name="Goodwin L."/>
            <person name="Pitluck S."/>
            <person name="Schmutz J."/>
            <person name="Larimer F."/>
            <person name="Land M."/>
            <person name="Hauser L."/>
            <person name="Kyrpides N."/>
            <person name="Mikhailova N."/>
            <person name="Zhao F."/>
            <person name="Li T."/>
            <person name="Liu Z."/>
            <person name="Overmann J."/>
            <person name="Bryant D.A."/>
            <person name="Richardson P."/>
        </authorList>
    </citation>
    <scope>NUCLEOTIDE SEQUENCE [LARGE SCALE GENOMIC DNA]</scope>
    <source>
        <strain>DSM 263 / NCIMB 8327</strain>
    </source>
</reference>